<feature type="chain" id="PRO_0000096358" description="Mediator of RNA polymerase II transcription subunit 11">
    <location>
        <begin position="1"/>
        <end position="115"/>
    </location>
</feature>
<feature type="coiled-coil region" evidence="1">
    <location>
        <begin position="56"/>
        <end position="107"/>
    </location>
</feature>
<feature type="mutagenesis site" description="Results in a decrease of TFIIK and RNA polymerase II occupancies at active promoters; when associated with K-24." evidence="10">
    <original>E</original>
    <variation>K</variation>
    <location>
        <position position="17"/>
    </location>
</feature>
<feature type="mutagenesis site" description="Results in a decrease of TFIIK and RNA polymerase II occupancies at active promoters; when associated with K-17." evidence="10">
    <original>L</original>
    <variation>K</variation>
    <location>
        <position position="24"/>
    </location>
</feature>
<feature type="mutagenesis site" description="Impairs interaction with RAD3, reducing the interaction of TFIIH with the head module and consequently resulting in a reduction of RNA polymerase II CTD 'Ser-5' phosphorylation." evidence="9">
    <original>T</original>
    <variation>A</variation>
    <location>
        <position position="31"/>
    </location>
</feature>
<feature type="mutagenesis site" description="Impairs interaction with SRB4/MED17, SRB6/MED22 and RAD3.">
    <original>L</original>
    <variation>P</variation>
    <location>
        <position position="66"/>
    </location>
</feature>
<feature type="mutagenesis site" description="Impairs interaction with SRB4/MED17." evidence="9">
    <original>G</original>
    <variation>S</variation>
    <location>
        <position position="92"/>
    </location>
</feature>
<feature type="helix" evidence="12">
    <location>
        <begin position="5"/>
        <end position="38"/>
    </location>
</feature>
<feature type="helix" evidence="12">
    <location>
        <begin position="42"/>
        <end position="44"/>
    </location>
</feature>
<feature type="helix" evidence="12">
    <location>
        <begin position="45"/>
        <end position="75"/>
    </location>
</feature>
<feature type="turn" evidence="12">
    <location>
        <begin position="78"/>
        <end position="80"/>
    </location>
</feature>
<feature type="helix" evidence="13">
    <location>
        <begin position="94"/>
        <end position="109"/>
    </location>
</feature>
<organism>
    <name type="scientific">Saccharomyces cerevisiae (strain ATCC 204508 / S288c)</name>
    <name type="common">Baker's yeast</name>
    <dbReference type="NCBI Taxonomy" id="559292"/>
    <lineage>
        <taxon>Eukaryota</taxon>
        <taxon>Fungi</taxon>
        <taxon>Dikarya</taxon>
        <taxon>Ascomycota</taxon>
        <taxon>Saccharomycotina</taxon>
        <taxon>Saccharomycetes</taxon>
        <taxon>Saccharomycetales</taxon>
        <taxon>Saccharomycetaceae</taxon>
        <taxon>Saccharomyces</taxon>
    </lineage>
</organism>
<accession>Q99278</accession>
<accession>D6VZT5</accession>
<comment type="function">
    <text evidence="5 6 7 9">Component of the Mediator complex, a coactivator involved in the regulated transcription of nearly all RNA polymerase II-dependent genes. Mediator functions as a bridge to convey information from gene-specific regulatory proteins to the basal RNA polymerase II transcription machinery. The Mediator complex, having a compact conformation in its free form, is recruited to promoters by direct interactions with regulatory proteins and serves for the assembly of a functional pre-initiation complex (PIC) with RNA polymerase II and the general transcription factors. The Mediator complex unfolds to an extended conformation and partially surrounds RNA polymerase II, specifically interacting with the unphosphorylated form of the C-terminal domain (CTD) of RNA polymerase II. The Mediator complex dissociates from the RNA polymerase II holoenzyme and stays at the promoter when transcriptional elongation begins. The essential MED11/22 heterodimer specifically functions in promoting stable PIC formation.</text>
</comment>
<comment type="subunit">
    <text evidence="2 7 8 9 10">Component of the Mediator complex, which is composed of at least 21 subunits that form three structurally distinct submodules. The Mediator head module contains MED6, MED8, MED11, SRB4/MED17, SRB5/MED18, ROX3/MED19, SRB2/MED20 and SRB6/MED22, the middle module contains MED1, MED4, NUT1/MED5, MED7, CSE2/MED9, NUT2/MED10, SRB7/MED21 and SOH1/MED31, and the tail module contains MED2, PGD1/MED3, RGR1/MED14, GAL11/MED15 and SIN4/MED16. The head and the middle modules interact directly with RNA polymerase II, whereas the elongated tail module interacts with gene-specific regulatory proteins. MED11 forms a heterodimer with SRB6/MED22. The MED11/22 heterodimer binds to and stabilizes the central head subunit SRB4/MED17. Interacts with TFIIH subunit RAD3.</text>
</comment>
<comment type="interaction">
    <interactant intactId="EBI-27213">
        <id>Q99278</id>
    </interactant>
    <interactant intactId="EBI-18025">
        <id>P32569</id>
        <label>SRB4</label>
    </interactant>
    <organismsDiffer>false</organismsDiffer>
    <experiments>22</experiments>
</comment>
<comment type="interaction">
    <interactant intactId="EBI-27213">
        <id>Q99278</id>
    </interactant>
    <interactant intactId="EBI-18039">
        <id>P32570</id>
        <label>SRB6</label>
    </interactant>
    <organismsDiffer>false</organismsDiffer>
    <experiments>18</experiments>
</comment>
<comment type="subcellular location">
    <subcellularLocation>
        <location evidence="3">Nucleus</location>
    </subcellularLocation>
</comment>
<comment type="miscellaneous">
    <text evidence="4">Present with 396 molecules/cell in log phase SD medium.</text>
</comment>
<comment type="similarity">
    <text evidence="11">Belongs to the mediator complex subunit 11 family.</text>
</comment>
<comment type="sequence caution" evidence="11">
    <conflict type="erroneous initiation">
        <sequence resource="EMBL-CDS" id="AAS56732"/>
    </conflict>
    <text>Extended N-terminus.</text>
</comment>
<comment type="sequence caution" evidence="11">
    <conflict type="erroneous initiation">
        <sequence resource="EMBL-CDS" id="CAA89748"/>
    </conflict>
    <text>Extended N-terminus.</text>
</comment>
<comment type="sequence caution" evidence="11">
    <conflict type="erroneous initiation">
        <sequence resource="EMBL-CDS" id="CAA89749"/>
    </conflict>
    <text>Extended N-terminus.</text>
</comment>
<comment type="sequence caution" evidence="11">
    <conflict type="erroneous initiation">
        <sequence resource="EMBL-CDS" id="DAA10009"/>
    </conflict>
    <text>Extended N-terminus.</text>
</comment>
<sequence length="115" mass="13307">MQPPYIQERLKSLNDIETQLCSMLQEASQVTFIFGELKRGNESVKPQFENHVKQFYERLDKSTTQLRKEIQLLDENVGTRLLPINVNKKALGQDTEKMEEQLDLLSAILDPSKSK</sequence>
<dbReference type="EMBL" id="Z49702">
    <property type="protein sequence ID" value="CAA89749.1"/>
    <property type="status" value="ALT_INIT"/>
    <property type="molecule type" value="Genomic_DNA"/>
</dbReference>
<dbReference type="EMBL" id="Z49702">
    <property type="protein sequence ID" value="CAA89748.1"/>
    <property type="status" value="ALT_INIT"/>
    <property type="molecule type" value="Genomic_DNA"/>
</dbReference>
<dbReference type="EMBL" id="AY558406">
    <property type="protein sequence ID" value="AAS56732.1"/>
    <property type="status" value="ALT_INIT"/>
    <property type="molecule type" value="Genomic_DNA"/>
</dbReference>
<dbReference type="EMBL" id="BK006946">
    <property type="protein sequence ID" value="DAA10009.1"/>
    <property type="status" value="ALT_INIT"/>
    <property type="molecule type" value="Genomic_DNA"/>
</dbReference>
<dbReference type="PIR" id="S54573">
    <property type="entry name" value="S54573"/>
</dbReference>
<dbReference type="RefSeq" id="NP_013830.1">
    <property type="nucleotide sequence ID" value="NM_001182612.1"/>
</dbReference>
<dbReference type="PDB" id="3J1O">
    <property type="method" value="EM"/>
    <property type="resolution" value="16.00 A"/>
    <property type="chains" value="H=2-115"/>
</dbReference>
<dbReference type="PDB" id="3R84">
    <property type="method" value="X-ray"/>
    <property type="resolution" value="2.05 A"/>
    <property type="chains" value="A/C/E/G/I/K/M/O/Q/S/U/W=5-89"/>
</dbReference>
<dbReference type="PDB" id="3RJ1">
    <property type="method" value="X-ray"/>
    <property type="resolution" value="4.30 A"/>
    <property type="chains" value="A/H/O=2-115"/>
</dbReference>
<dbReference type="PDB" id="4GWP">
    <property type="method" value="X-ray"/>
    <property type="resolution" value="4.20 A"/>
    <property type="chains" value="A=1-115"/>
</dbReference>
<dbReference type="PDB" id="4GWQ">
    <property type="method" value="X-ray"/>
    <property type="resolution" value="4.50 A"/>
    <property type="chains" value="A=1-115"/>
</dbReference>
<dbReference type="PDB" id="4H62">
    <property type="method" value="X-ray"/>
    <property type="resolution" value="3.00 A"/>
    <property type="chains" value="K=84-115"/>
</dbReference>
<dbReference type="PDB" id="4V1O">
    <property type="method" value="EM"/>
    <property type="resolution" value="9.70 A"/>
    <property type="chains" value="V=1-115"/>
</dbReference>
<dbReference type="PDB" id="5OQM">
    <property type="method" value="EM"/>
    <property type="resolution" value="5.80 A"/>
    <property type="chains" value="c=1-115"/>
</dbReference>
<dbReference type="PDB" id="5SVA">
    <property type="method" value="EM"/>
    <property type="resolution" value="15.30 A"/>
    <property type="chains" value="O=1-115"/>
</dbReference>
<dbReference type="PDB" id="7UI9">
    <property type="method" value="EM"/>
    <property type="resolution" value="3.30 A"/>
    <property type="chains" value="k=1-115"/>
</dbReference>
<dbReference type="PDB" id="7UIF">
    <property type="method" value="EM"/>
    <property type="resolution" value="4.60 A"/>
    <property type="chains" value="k=1-115"/>
</dbReference>
<dbReference type="PDB" id="7UIG">
    <property type="method" value="EM"/>
    <property type="resolution" value="4.30 A"/>
    <property type="chains" value="k=1-115"/>
</dbReference>
<dbReference type="PDB" id="7UIO">
    <property type="method" value="EM"/>
    <property type="resolution" value="3.30 A"/>
    <property type="chains" value="Ak/Bk=1-115"/>
</dbReference>
<dbReference type="PDB" id="8CEN">
    <property type="method" value="EM"/>
    <property type="resolution" value="3.00 A"/>
    <property type="chains" value="c=1-115"/>
</dbReference>
<dbReference type="PDB" id="8CEO">
    <property type="method" value="EM"/>
    <property type="resolution" value="3.60 A"/>
    <property type="chains" value="c=1-115"/>
</dbReference>
<dbReference type="PDBsum" id="3J1O"/>
<dbReference type="PDBsum" id="3R84"/>
<dbReference type="PDBsum" id="3RJ1"/>
<dbReference type="PDBsum" id="4GWP"/>
<dbReference type="PDBsum" id="4GWQ"/>
<dbReference type="PDBsum" id="4H62"/>
<dbReference type="PDBsum" id="4V1O"/>
<dbReference type="PDBsum" id="5OQM"/>
<dbReference type="PDBsum" id="5SVA"/>
<dbReference type="PDBsum" id="7UI9"/>
<dbReference type="PDBsum" id="7UIF"/>
<dbReference type="PDBsum" id="7UIG"/>
<dbReference type="PDBsum" id="7UIO"/>
<dbReference type="PDBsum" id="8CEN"/>
<dbReference type="PDBsum" id="8CEO"/>
<dbReference type="EMDB" id="EMD-26542"/>
<dbReference type="EMDB" id="EMD-26544"/>
<dbReference type="EMDB" id="EMD-26545"/>
<dbReference type="EMDB" id="EMD-26551"/>
<dbReference type="EMDB" id="EMD-2786"/>
<dbReference type="EMDB" id="EMD-3850"/>
<dbReference type="EMDB" id="EMD-8305"/>
<dbReference type="SMR" id="Q99278"/>
<dbReference type="BioGRID" id="35288">
    <property type="interactions" value="481"/>
</dbReference>
<dbReference type="ComplexPortal" id="CPX-3226">
    <property type="entry name" value="Core mediator complex"/>
</dbReference>
<dbReference type="DIP" id="DIP-1434N"/>
<dbReference type="FunCoup" id="Q99278">
    <property type="interactions" value="166"/>
</dbReference>
<dbReference type="IntAct" id="Q99278">
    <property type="interactions" value="57"/>
</dbReference>
<dbReference type="MINT" id="Q99278"/>
<dbReference type="STRING" id="4932.YMR112C"/>
<dbReference type="PaxDb" id="4932-YMR112C"/>
<dbReference type="PeptideAtlas" id="Q99278"/>
<dbReference type="GeneID" id="855139"/>
<dbReference type="KEGG" id="sce:YMR112C"/>
<dbReference type="AGR" id="SGD:S000004718"/>
<dbReference type="SGD" id="S000004718">
    <property type="gene designation" value="MED11"/>
</dbReference>
<dbReference type="eggNOG" id="ENOG502S3YW">
    <property type="taxonomic scope" value="Eukaryota"/>
</dbReference>
<dbReference type="HOGENOM" id="CLU_121031_1_0_1"/>
<dbReference type="InParanoid" id="Q99278"/>
<dbReference type="OrthoDB" id="5418434at2759"/>
<dbReference type="BioCyc" id="YEAST:G3O-32808-MONOMER"/>
<dbReference type="BioGRID-ORCS" id="855139">
    <property type="hits" value="6 hits in 10 CRISPR screens"/>
</dbReference>
<dbReference type="EvolutionaryTrace" id="Q99278"/>
<dbReference type="PRO" id="PR:Q99278"/>
<dbReference type="Proteomes" id="UP000002311">
    <property type="component" value="Chromosome XIII"/>
</dbReference>
<dbReference type="RNAct" id="Q99278">
    <property type="molecule type" value="protein"/>
</dbReference>
<dbReference type="GO" id="GO:0070847">
    <property type="term" value="C:core mediator complex"/>
    <property type="evidence" value="ECO:0000314"/>
    <property type="project" value="SGD"/>
</dbReference>
<dbReference type="GO" id="GO:0016592">
    <property type="term" value="C:mediator complex"/>
    <property type="evidence" value="ECO:0000318"/>
    <property type="project" value="GO_Central"/>
</dbReference>
<dbReference type="GO" id="GO:0005634">
    <property type="term" value="C:nucleus"/>
    <property type="evidence" value="ECO:0000314"/>
    <property type="project" value="ComplexPortal"/>
</dbReference>
<dbReference type="GO" id="GO:0001097">
    <property type="term" value="F:TFIIH-class transcription factor complex binding"/>
    <property type="evidence" value="ECO:0000314"/>
    <property type="project" value="SGD"/>
</dbReference>
<dbReference type="GO" id="GO:0003713">
    <property type="term" value="F:transcription coactivator activity"/>
    <property type="evidence" value="ECO:0000315"/>
    <property type="project" value="SGD"/>
</dbReference>
<dbReference type="GO" id="GO:0000122">
    <property type="term" value="P:negative regulation of transcription by RNA polymerase II"/>
    <property type="evidence" value="ECO:0000315"/>
    <property type="project" value="SGD"/>
</dbReference>
<dbReference type="GO" id="GO:0045944">
    <property type="term" value="P:positive regulation of transcription by RNA polymerase II"/>
    <property type="evidence" value="ECO:0000315"/>
    <property type="project" value="SGD"/>
</dbReference>
<dbReference type="GO" id="GO:0032968">
    <property type="term" value="P:positive regulation of transcription elongation by RNA polymerase II"/>
    <property type="evidence" value="ECO:0000314"/>
    <property type="project" value="ComplexPortal"/>
</dbReference>
<dbReference type="GO" id="GO:0060261">
    <property type="term" value="P:positive regulation of transcription initiation by RNA polymerase II"/>
    <property type="evidence" value="ECO:0000314"/>
    <property type="project" value="ComplexPortal"/>
</dbReference>
<dbReference type="GO" id="GO:0051123">
    <property type="term" value="P:RNA polymerase II preinitiation complex assembly"/>
    <property type="evidence" value="ECO:0000314"/>
    <property type="project" value="ComplexPortal"/>
</dbReference>
<dbReference type="FunFam" id="1.10.287.3490:FF:000003">
    <property type="entry name" value="Mediator of RNA polymerase II transcription subunit 11"/>
    <property type="match status" value="1"/>
</dbReference>
<dbReference type="Gene3D" id="1.10.287.3490">
    <property type="match status" value="1"/>
</dbReference>
<dbReference type="InterPro" id="IPR019404">
    <property type="entry name" value="Mediator_Med11"/>
</dbReference>
<dbReference type="Pfam" id="PF10280">
    <property type="entry name" value="Med11"/>
    <property type="match status" value="1"/>
</dbReference>
<keyword id="KW-0002">3D-structure</keyword>
<keyword id="KW-0010">Activator</keyword>
<keyword id="KW-0175">Coiled coil</keyword>
<keyword id="KW-0539">Nucleus</keyword>
<keyword id="KW-1185">Reference proteome</keyword>
<keyword id="KW-0804">Transcription</keyword>
<keyword id="KW-0805">Transcription regulation</keyword>
<evidence type="ECO:0000255" key="1"/>
<evidence type="ECO:0000269" key="2">
    <source>
    </source>
</evidence>
<evidence type="ECO:0000269" key="3">
    <source>
    </source>
</evidence>
<evidence type="ECO:0000269" key="4">
    <source>
    </source>
</evidence>
<evidence type="ECO:0000269" key="5">
    <source>
    </source>
</evidence>
<evidence type="ECO:0000269" key="6">
    <source>
    </source>
</evidence>
<evidence type="ECO:0000269" key="7">
    <source>
    </source>
</evidence>
<evidence type="ECO:0000269" key="8">
    <source>
    </source>
</evidence>
<evidence type="ECO:0000269" key="9">
    <source>
    </source>
</evidence>
<evidence type="ECO:0000269" key="10">
    <source>
    </source>
</evidence>
<evidence type="ECO:0000305" key="11"/>
<evidence type="ECO:0007829" key="12">
    <source>
        <dbReference type="PDB" id="3R84"/>
    </source>
</evidence>
<evidence type="ECO:0007829" key="13">
    <source>
        <dbReference type="PDB" id="4H62"/>
    </source>
</evidence>
<reference key="1">
    <citation type="journal article" date="1997" name="Nature">
        <title>The nucleotide sequence of Saccharomyces cerevisiae chromosome XIII.</title>
        <authorList>
            <person name="Bowman S."/>
            <person name="Churcher C.M."/>
            <person name="Badcock K."/>
            <person name="Brown D."/>
            <person name="Chillingworth T."/>
            <person name="Connor R."/>
            <person name="Dedman K."/>
            <person name="Devlin K."/>
            <person name="Gentles S."/>
            <person name="Hamlin N."/>
            <person name="Hunt S."/>
            <person name="Jagels K."/>
            <person name="Lye G."/>
            <person name="Moule S."/>
            <person name="Odell C."/>
            <person name="Pearson D."/>
            <person name="Rajandream M.A."/>
            <person name="Rice P."/>
            <person name="Skelton J."/>
            <person name="Walsh S.V."/>
            <person name="Whitehead S."/>
            <person name="Barrell B.G."/>
        </authorList>
    </citation>
    <scope>NUCLEOTIDE SEQUENCE [LARGE SCALE GENOMIC DNA]</scope>
    <source>
        <strain>ATCC 204508 / S288c</strain>
    </source>
</reference>
<reference key="2">
    <citation type="journal article" date="2014" name="G3 (Bethesda)">
        <title>The reference genome sequence of Saccharomyces cerevisiae: Then and now.</title>
        <authorList>
            <person name="Engel S.R."/>
            <person name="Dietrich F.S."/>
            <person name="Fisk D.G."/>
            <person name="Binkley G."/>
            <person name="Balakrishnan R."/>
            <person name="Costanzo M.C."/>
            <person name="Dwight S.S."/>
            <person name="Hitz B.C."/>
            <person name="Karra K."/>
            <person name="Nash R.S."/>
            <person name="Weng S."/>
            <person name="Wong E.D."/>
            <person name="Lloyd P."/>
            <person name="Skrzypek M.S."/>
            <person name="Miyasato S.R."/>
            <person name="Simison M."/>
            <person name="Cherry J.M."/>
        </authorList>
    </citation>
    <scope>GENOME REANNOTATION</scope>
    <source>
        <strain>ATCC 204508 / S288c</strain>
    </source>
</reference>
<reference key="3">
    <citation type="journal article" date="2007" name="Genome Res.">
        <title>Approaching a complete repository of sequence-verified protein-encoding clones for Saccharomyces cerevisiae.</title>
        <authorList>
            <person name="Hu Y."/>
            <person name="Rolfs A."/>
            <person name="Bhullar B."/>
            <person name="Murthy T.V.S."/>
            <person name="Zhu C."/>
            <person name="Berger M.F."/>
            <person name="Camargo A.A."/>
            <person name="Kelley F."/>
            <person name="McCarron S."/>
            <person name="Jepson D."/>
            <person name="Richardson A."/>
            <person name="Raphael J."/>
            <person name="Moreira D."/>
            <person name="Taycher E."/>
            <person name="Zuo D."/>
            <person name="Mohr S."/>
            <person name="Kane M.F."/>
            <person name="Williamson J."/>
            <person name="Simpson A.J.G."/>
            <person name="Bulyk M.L."/>
            <person name="Harlow E."/>
            <person name="Marsischky G."/>
            <person name="Kolodner R.D."/>
            <person name="LaBaer J."/>
        </authorList>
    </citation>
    <scope>NUCLEOTIDE SEQUENCE [GENOMIC DNA]</scope>
    <source>
        <strain>ATCC 204508 / S288c</strain>
    </source>
</reference>
<reference key="4">
    <citation type="journal article" date="1998" name="J. Biol. Chem.">
        <title>Identification of new mediator subunits in the RNA polymerase II holoenzyme from Saccharomyces cerevisiae.</title>
        <authorList>
            <person name="Gustafsson C.M."/>
            <person name="Myers L.C."/>
            <person name="Beve J."/>
            <person name="Spaahr H."/>
            <person name="Lui M."/>
            <person name="Erdjument-Bromage H."/>
            <person name="Tempst P."/>
            <person name="Kornberg R.D."/>
        </authorList>
    </citation>
    <scope>COMPONENT OF MEDIATOR COMPLEX</scope>
</reference>
<reference key="5">
    <citation type="journal article" date="2001" name="J. Biol. Chem.">
        <title>The structural and functional organization of the yeast mediator complex.</title>
        <authorList>
            <person name="Kang J.S."/>
            <person name="Kim S.H."/>
            <person name="Hwang M.S."/>
            <person name="Han S.J."/>
            <person name="Lee Y.C."/>
            <person name="Kim Y.-J."/>
        </authorList>
    </citation>
    <scope>INTERACTION WITH SRB4</scope>
</reference>
<reference key="6">
    <citation type="journal article" date="2003" name="Nature">
        <title>Global analysis of protein localization in budding yeast.</title>
        <authorList>
            <person name="Huh W.-K."/>
            <person name="Falvo J.V."/>
            <person name="Gerke L.C."/>
            <person name="Carroll A.S."/>
            <person name="Howson R.W."/>
            <person name="Weissman J.S."/>
            <person name="O'Shea E.K."/>
        </authorList>
    </citation>
    <scope>SUBCELLULAR LOCATION [LARGE SCALE ANALYSIS]</scope>
</reference>
<reference key="7">
    <citation type="journal article" date="2003" name="Nature">
        <title>Global analysis of protein expression in yeast.</title>
        <authorList>
            <person name="Ghaemmaghami S."/>
            <person name="Huh W.-K."/>
            <person name="Bower K."/>
            <person name="Howson R.W."/>
            <person name="Belle A."/>
            <person name="Dephoure N."/>
            <person name="O'Shea E.K."/>
            <person name="Weissman J.S."/>
        </authorList>
    </citation>
    <scope>LEVEL OF PROTEIN EXPRESSION [LARGE SCALE ANALYSIS]</scope>
</reference>
<reference key="8">
    <citation type="journal article" date="2004" name="Mol. Cell">
        <title>A unified nomenclature for protein subunits of mediator complexes linking transcriptional regulators to RNA polymerase II.</title>
        <authorList>
            <person name="Bourbon H.-M."/>
            <person name="Aguilera A."/>
            <person name="Ansari A.Z."/>
            <person name="Asturias F.J."/>
            <person name="Berk A.J."/>
            <person name="Bjoerklund S."/>
            <person name="Blackwell T.K."/>
            <person name="Borggrefe T."/>
            <person name="Carey M."/>
            <person name="Carlson M."/>
            <person name="Conaway J.W."/>
            <person name="Conaway R.C."/>
            <person name="Emmons S.W."/>
            <person name="Fondell J.D."/>
            <person name="Freedman L.P."/>
            <person name="Fukasawa T."/>
            <person name="Gustafsson C.M."/>
            <person name="Han M."/>
            <person name="He X."/>
            <person name="Herman P.K."/>
            <person name="Hinnebusch A.G."/>
            <person name="Holmberg S."/>
            <person name="Holstege F.C.P."/>
            <person name="Jaehning J.A."/>
            <person name="Kim Y.-J."/>
            <person name="Kuras L."/>
            <person name="Leutz A."/>
            <person name="Lis J.T."/>
            <person name="Meisterernest M."/>
            <person name="Naeaer A.M."/>
            <person name="Nasmyth K."/>
            <person name="Parvin J.D."/>
            <person name="Ptashne M."/>
            <person name="Reinberg D."/>
            <person name="Ronne H."/>
            <person name="Sadowski I."/>
            <person name="Sakurai H."/>
            <person name="Sipiczki M."/>
            <person name="Sternberg P.W."/>
            <person name="Stillman D.J."/>
            <person name="Strich R."/>
            <person name="Struhl K."/>
            <person name="Svejstrup J.Q."/>
            <person name="Tuck S."/>
            <person name="Winston F."/>
            <person name="Roeder R.G."/>
            <person name="Kornberg R.D."/>
        </authorList>
    </citation>
    <scope>NOMENCLATURE</scope>
</reference>
<reference key="9">
    <citation type="journal article" date="2004" name="Nucleic Acids Res.">
        <title>A high resolution protein interaction map of the yeast Mediator complex.</title>
        <authorList>
            <person name="Guglielmi B."/>
            <person name="van Berkum N.L."/>
            <person name="Klapholz B."/>
            <person name="Bijma T."/>
            <person name="Boube M."/>
            <person name="Boschiero C."/>
            <person name="Bourbon H.-M."/>
            <person name="Holstege F.C.P."/>
            <person name="Werner M."/>
        </authorList>
    </citation>
    <scope>TOPOLOGY OF THE MEDIATOR COMPLEX</scope>
</reference>
<reference key="10">
    <citation type="journal article" date="2005" name="J. Biol. Chem.">
        <title>Preponderance of free mediator in the yeast Saccharomyces cerevisiae.</title>
        <authorList>
            <person name="Takagi Y."/>
            <person name="Chadick J.Z."/>
            <person name="Davis J.A."/>
            <person name="Asturias F.J."/>
        </authorList>
    </citation>
    <scope>CHARACTERIZATION OF THE MEDIATOR COMPLEX</scope>
</reference>
<reference key="11">
    <citation type="journal article" date="2005" name="J. Biol. Chem.">
        <title>Mediator and TFIIH govern carboxyl-terminal domain-dependent transcription in yeast extracts.</title>
        <authorList>
            <person name="Nair D."/>
            <person name="Kim Y."/>
            <person name="Myers L.C."/>
        </authorList>
    </citation>
    <scope>FUNCTION OF THE MEDIATOR COMPLEX</scope>
</reference>
<reference key="12">
    <citation type="journal article" date="2006" name="J. Biol. Chem.">
        <title>Mediator as a general transcription factor.</title>
        <authorList>
            <person name="Takagi Y."/>
            <person name="Kornberg R.D."/>
        </authorList>
    </citation>
    <scope>FUNCTION OF THE MEDIATOR COMPLEX</scope>
</reference>
<reference key="13">
    <citation type="journal article" date="2006" name="Mol. Cell">
        <title>Head module control of mediator interactions.</title>
        <authorList>
            <person name="Takagi Y."/>
            <person name="Calero G."/>
            <person name="Komori H."/>
            <person name="Brown J.A."/>
            <person name="Ehrensberger A.H."/>
            <person name="Hudmon A."/>
            <person name="Asturias F.J."/>
            <person name="Kornberg R.D."/>
        </authorList>
    </citation>
    <scope>INTERACTION WITH SRB4</scope>
    <scope>FUNCTION OF THE MEDIATOR COMPLEX HEAD MODULE</scope>
    <scope>ELECTRON MICROSCOPY OF THE MEDIATOR COMPLEX HEAD MODULE</scope>
    <scope>INTERACTION OF THE MEDIATOR COMPLEX HEAD MODULE WITH RNA POLYMERASE II AND TFIIF</scope>
</reference>
<reference key="14">
    <citation type="journal article" date="2006" name="Proc. Natl. Acad. Sci. U.S.A.">
        <title>A large-scale full-length cDNA analysis to explore the budding yeast transcriptome.</title>
        <authorList>
            <person name="Miura F."/>
            <person name="Kawaguchi N."/>
            <person name="Sese J."/>
            <person name="Toyoda A."/>
            <person name="Hattori M."/>
            <person name="Morishita S."/>
            <person name="Ito T."/>
        </authorList>
    </citation>
    <scope>IDENTIFICATION OF INITIATION SITE</scope>
</reference>
<reference key="15">
    <citation type="journal article" date="2007" name="J. Biol. Chem.">
        <title>Med19(Rox3) regulates intermodule interactions in the Saccharomyces cerevisiae mediator complex.</title>
        <authorList>
            <person name="Baidoobonso S.M."/>
            <person name="Guidi B.W."/>
            <person name="Myers L.C."/>
        </authorList>
    </citation>
    <scope>CHARACTERIZATION OF THE MEDIATOR COMPLEX</scope>
    <scope>INTERACTION OF THE MEDIATOR COMPLEX WITH RNA POLYMERASE II</scope>
</reference>
<reference key="16">
    <citation type="journal article" date="2008" name="Mol. Cell">
        <title>Mediator-dependent recruitment of TFIIH modules in pre-initiation complex.</title>
        <authorList>
            <person name="Esnault C."/>
            <person name="Ghavi-Helm Y."/>
            <person name="Brun S."/>
            <person name="Soutourina J."/>
            <person name="Van Berkum N."/>
            <person name="Boschiero C."/>
            <person name="Holstege F."/>
            <person name="Werner M."/>
        </authorList>
    </citation>
    <scope>FUNCTION</scope>
    <scope>INTERACTION WITH SRB4; SRB6 AND RAD3</scope>
    <scope>MUTAGENESIS OF THR-31 AND GLY-92</scope>
</reference>
<reference key="17">
    <citation type="journal article" date="2002" name="Mol. Cell">
        <title>Structure of the yeast RNA polymerase II holoenzyme: mediator conformation and polymerase interaction.</title>
        <authorList>
            <person name="Davis J.A."/>
            <person name="Takagi Y."/>
            <person name="Kornberg R.D."/>
            <person name="Asturias F.J."/>
        </authorList>
    </citation>
    <scope>ELECTRON MICROSCOPY OF MEDIATOR COMPLEX IN COMPLEX WITH RNA POLYMERASE II</scope>
</reference>
<reference key="18">
    <citation type="journal article" date="2011" name="Nature">
        <title>Architecture of the Mediator head module.</title>
        <authorList>
            <person name="Imasaki T."/>
            <person name="Calero G."/>
            <person name="Cai G."/>
            <person name="Tsai K.-L."/>
            <person name="Yamada K."/>
            <person name="Cardelli F."/>
            <person name="Erdjument-Bromage H."/>
            <person name="Tempst P."/>
            <person name="Berger I."/>
            <person name="Kornberg G.L."/>
            <person name="Asturias F.J."/>
            <person name="Kornberg R.D."/>
            <person name="Takagi Y."/>
        </authorList>
    </citation>
    <scope>X-RAY CRYSTALLOGRAPHY (4.3 ANGSTROMS) OF 1-115</scope>
</reference>
<reference key="19">
    <citation type="journal article" date="2011" name="Nucleic Acids Res.">
        <title>Mediator head subcomplex Med11/22 contains a common helix bundle building block with a specific function in transcription initiation complex stabilization.</title>
        <authorList>
            <person name="Seizl M."/>
            <person name="Lariviere L."/>
            <person name="Pfaffeneder T."/>
            <person name="Wenzeck L."/>
            <person name="Cramer P."/>
        </authorList>
    </citation>
    <scope>X-RAY CRYSTALLOGRAPHY (2.05 ANGSTROMS) OF 5-89 IN COMPLEX WITH SRB6</scope>
    <scope>INTERACTION WITH SRB4</scope>
    <scope>IDENTIFICATION OF INITIATION SITE</scope>
    <scope>MUTAGENESIS OF GLU-17 AND LEU-24</scope>
</reference>
<gene>
    <name type="primary">MED11</name>
    <name type="ordered locus">YMR112C</name>
    <name type="ORF">YM9718.11C</name>
</gene>
<proteinExistence type="evidence at protein level"/>
<protein>
    <recommendedName>
        <fullName>Mediator of RNA polymerase II transcription subunit 11</fullName>
    </recommendedName>
    <alternativeName>
        <fullName>Mediator complex subunit 11</fullName>
    </alternativeName>
</protein>
<name>MED11_YEAST</name>